<protein>
    <recommendedName>
        <fullName evidence="1">UDP-N-acetylglucosamine--N-acetylmuramyl-(pentapeptide) pyrophosphoryl-undecaprenol N-acetylglucosamine transferase</fullName>
        <ecNumber evidence="1">2.4.1.227</ecNumber>
    </recommendedName>
    <alternativeName>
        <fullName evidence="1">Undecaprenyl-PP-MurNAc-pentapeptide-UDPGlcNAc GlcNAc transferase</fullName>
    </alternativeName>
</protein>
<feature type="chain" id="PRO_0000109226" description="UDP-N-acetylglucosamine--N-acetylmuramyl-(pentapeptide) pyrophosphoryl-undecaprenol N-acetylglucosamine transferase">
    <location>
        <begin position="1"/>
        <end position="360"/>
    </location>
</feature>
<feature type="binding site" evidence="1">
    <location>
        <position position="198"/>
    </location>
    <ligand>
        <name>UDP-N-acetyl-alpha-D-glucosamine</name>
        <dbReference type="ChEBI" id="CHEBI:57705"/>
    </ligand>
</feature>
<feature type="binding site" evidence="1">
    <location>
        <position position="289"/>
    </location>
    <ligand>
        <name>UDP-N-acetyl-alpha-D-glucosamine</name>
        <dbReference type="ChEBI" id="CHEBI:57705"/>
    </ligand>
</feature>
<sequence>MPKKILFTGGGTVGHVTLNLILIPKFIKDGWEVHYIGDKNGIEHIEIEKSGLDVTFHAIATGKLRRYFSWQNLADVFKVALGLLQSLFIVAKLRPQALFSKGGFVSVPPVVAAKLLGKPVFIHESDRSMGLANKIAYKFATTMYTTFEQEDQLSKVKHLGAVTKVFKDANQMPESTQLEAVKEYFSRDLKTLLFIGGSAGAHVFNQFISDHPELKQRYNIINITGDPHLNELSSHLYRVDYVTDLYQPLIAMADLVVTRGGSNTLFELLAMAKLHLIVPLGKEASRGDQLENATYFEKRGYAKQLQEPDLTLHNFDQAMADLFEHQADYEATMLATKEIQSPDFFYDLLRADISSAIKEK</sequence>
<proteinExistence type="inferred from homology"/>
<accession>P0DC56</accession>
<accession>Q8K6R7</accession>
<reference key="1">
    <citation type="journal article" date="2002" name="Proc. Natl. Acad. Sci. U.S.A.">
        <title>Genome sequence of a serotype M3 strain of group A Streptococcus: phage-encoded toxins, the high-virulence phenotype, and clone emergence.</title>
        <authorList>
            <person name="Beres S.B."/>
            <person name="Sylva G.L."/>
            <person name="Barbian K.D."/>
            <person name="Lei B."/>
            <person name="Hoff J.S."/>
            <person name="Mammarella N.D."/>
            <person name="Liu M.-Y."/>
            <person name="Smoot J.C."/>
            <person name="Porcella S.F."/>
            <person name="Parkins L.D."/>
            <person name="Campbell D.S."/>
            <person name="Smith T.M."/>
            <person name="McCormick J.K."/>
            <person name="Leung D.Y.M."/>
            <person name="Schlievert P.M."/>
            <person name="Musser J.M."/>
        </authorList>
    </citation>
    <scope>NUCLEOTIDE SEQUENCE [LARGE SCALE GENOMIC DNA]</scope>
    <source>
        <strain>ATCC BAA-595 / MGAS315</strain>
    </source>
</reference>
<evidence type="ECO:0000255" key="1">
    <source>
        <dbReference type="HAMAP-Rule" id="MF_00033"/>
    </source>
</evidence>
<keyword id="KW-0131">Cell cycle</keyword>
<keyword id="KW-0132">Cell division</keyword>
<keyword id="KW-1003">Cell membrane</keyword>
<keyword id="KW-0133">Cell shape</keyword>
<keyword id="KW-0961">Cell wall biogenesis/degradation</keyword>
<keyword id="KW-0328">Glycosyltransferase</keyword>
<keyword id="KW-0472">Membrane</keyword>
<keyword id="KW-0573">Peptidoglycan synthesis</keyword>
<keyword id="KW-0808">Transferase</keyword>
<gene>
    <name evidence="1" type="primary">murG</name>
    <name type="ordered locus">SpyM3_1175</name>
</gene>
<organism>
    <name type="scientific">Streptococcus pyogenes serotype M3 (strain ATCC BAA-595 / MGAS315)</name>
    <dbReference type="NCBI Taxonomy" id="198466"/>
    <lineage>
        <taxon>Bacteria</taxon>
        <taxon>Bacillati</taxon>
        <taxon>Bacillota</taxon>
        <taxon>Bacilli</taxon>
        <taxon>Lactobacillales</taxon>
        <taxon>Streptococcaceae</taxon>
        <taxon>Streptococcus</taxon>
    </lineage>
</organism>
<comment type="function">
    <text evidence="1">Cell wall formation. Catalyzes the transfer of a GlcNAc subunit on undecaprenyl-pyrophosphoryl-MurNAc-pentapeptide (lipid intermediate I) to form undecaprenyl-pyrophosphoryl-MurNAc-(pentapeptide)GlcNAc (lipid intermediate II).</text>
</comment>
<comment type="catalytic activity">
    <reaction evidence="1">
        <text>Mur2Ac(oyl-L-Ala-gamma-D-Glu-L-Lys-D-Ala-D-Ala)-di-trans,octa-cis-undecaprenyl diphosphate + UDP-N-acetyl-alpha-D-glucosamine = beta-D-GlcNAc-(1-&gt;4)-Mur2Ac(oyl-L-Ala-gamma-D-Glu-L-Lys-D-Ala-D-Ala)-di-trans,octa-cis-undecaprenyl diphosphate + UDP + H(+)</text>
        <dbReference type="Rhea" id="RHEA:23192"/>
        <dbReference type="ChEBI" id="CHEBI:15378"/>
        <dbReference type="ChEBI" id="CHEBI:57705"/>
        <dbReference type="ChEBI" id="CHEBI:58223"/>
        <dbReference type="ChEBI" id="CHEBI:60032"/>
        <dbReference type="ChEBI" id="CHEBI:60033"/>
        <dbReference type="EC" id="2.4.1.227"/>
    </reaction>
</comment>
<comment type="pathway">
    <text evidence="1">Cell wall biogenesis; peptidoglycan biosynthesis.</text>
</comment>
<comment type="subcellular location">
    <subcellularLocation>
        <location evidence="1">Cell membrane</location>
        <topology evidence="1">Peripheral membrane protein</topology>
        <orientation evidence="1">Cytoplasmic side</orientation>
    </subcellularLocation>
</comment>
<comment type="similarity">
    <text evidence="1">Belongs to the glycosyltransferase 28 family. MurG subfamily.</text>
</comment>
<name>MURG_STRP3</name>
<dbReference type="EC" id="2.4.1.227" evidence="1"/>
<dbReference type="EMBL" id="AE014074">
    <property type="protein sequence ID" value="AAM79782.1"/>
    <property type="molecule type" value="Genomic_DNA"/>
</dbReference>
<dbReference type="RefSeq" id="WP_032461317.1">
    <property type="nucleotide sequence ID" value="NC_004070.1"/>
</dbReference>
<dbReference type="SMR" id="P0DC56"/>
<dbReference type="CAZy" id="GT28">
    <property type="family name" value="Glycosyltransferase Family 28"/>
</dbReference>
<dbReference type="KEGG" id="spg:SpyM3_1175"/>
<dbReference type="HOGENOM" id="CLU_037404_0_0_9"/>
<dbReference type="UniPathway" id="UPA00219"/>
<dbReference type="Proteomes" id="UP000000564">
    <property type="component" value="Chromosome"/>
</dbReference>
<dbReference type="GO" id="GO:0005886">
    <property type="term" value="C:plasma membrane"/>
    <property type="evidence" value="ECO:0007669"/>
    <property type="project" value="UniProtKB-SubCell"/>
</dbReference>
<dbReference type="GO" id="GO:0050511">
    <property type="term" value="F:undecaprenyldiphospho-muramoylpentapeptide beta-N-acetylglucosaminyltransferase activity"/>
    <property type="evidence" value="ECO:0007669"/>
    <property type="project" value="UniProtKB-UniRule"/>
</dbReference>
<dbReference type="GO" id="GO:0005975">
    <property type="term" value="P:carbohydrate metabolic process"/>
    <property type="evidence" value="ECO:0007669"/>
    <property type="project" value="InterPro"/>
</dbReference>
<dbReference type="GO" id="GO:0051301">
    <property type="term" value="P:cell division"/>
    <property type="evidence" value="ECO:0007669"/>
    <property type="project" value="UniProtKB-KW"/>
</dbReference>
<dbReference type="GO" id="GO:0071555">
    <property type="term" value="P:cell wall organization"/>
    <property type="evidence" value="ECO:0007669"/>
    <property type="project" value="UniProtKB-KW"/>
</dbReference>
<dbReference type="GO" id="GO:0030259">
    <property type="term" value="P:lipid glycosylation"/>
    <property type="evidence" value="ECO:0007669"/>
    <property type="project" value="UniProtKB-UniRule"/>
</dbReference>
<dbReference type="GO" id="GO:0009252">
    <property type="term" value="P:peptidoglycan biosynthetic process"/>
    <property type="evidence" value="ECO:0007669"/>
    <property type="project" value="UniProtKB-UniRule"/>
</dbReference>
<dbReference type="GO" id="GO:0008360">
    <property type="term" value="P:regulation of cell shape"/>
    <property type="evidence" value="ECO:0007669"/>
    <property type="project" value="UniProtKB-KW"/>
</dbReference>
<dbReference type="CDD" id="cd03785">
    <property type="entry name" value="GT28_MurG"/>
    <property type="match status" value="1"/>
</dbReference>
<dbReference type="Gene3D" id="3.40.50.2000">
    <property type="entry name" value="Glycogen Phosphorylase B"/>
    <property type="match status" value="2"/>
</dbReference>
<dbReference type="HAMAP" id="MF_00033">
    <property type="entry name" value="MurG"/>
    <property type="match status" value="1"/>
</dbReference>
<dbReference type="InterPro" id="IPR006009">
    <property type="entry name" value="GlcNAc_MurG"/>
</dbReference>
<dbReference type="InterPro" id="IPR007235">
    <property type="entry name" value="Glyco_trans_28_C"/>
</dbReference>
<dbReference type="InterPro" id="IPR004276">
    <property type="entry name" value="GlycoTrans_28_N"/>
</dbReference>
<dbReference type="PANTHER" id="PTHR21015:SF27">
    <property type="entry name" value="UDP-N-ACETYLGLUCOSAMINE--N-ACETYLMURAMYL-(PENTAPEPTIDE) PYROPHOSPHORYL-UNDECAPRENOL N-ACETYLGLUCOSAMINE TRANSFERASE"/>
    <property type="match status" value="1"/>
</dbReference>
<dbReference type="PANTHER" id="PTHR21015">
    <property type="entry name" value="UDP-N-ACETYLGLUCOSAMINE--N-ACETYLMURAMYL-(PENTAPEPTIDE) PYROPHOSPHORYL-UNDECAPRENOL N-ACETYLGLUCOSAMINE TRANSFERASE 1"/>
    <property type="match status" value="1"/>
</dbReference>
<dbReference type="Pfam" id="PF04101">
    <property type="entry name" value="Glyco_tran_28_C"/>
    <property type="match status" value="1"/>
</dbReference>
<dbReference type="Pfam" id="PF03033">
    <property type="entry name" value="Glyco_transf_28"/>
    <property type="match status" value="1"/>
</dbReference>
<dbReference type="SUPFAM" id="SSF53756">
    <property type="entry name" value="UDP-Glycosyltransferase/glycogen phosphorylase"/>
    <property type="match status" value="1"/>
</dbReference>